<accession>A1AGM7</accession>
<comment type="function">
    <text evidence="2">Catalyzes the GTP-dependent ribosomal translocation step during translation elongation. During this step, the ribosome changes from the pre-translocational (PRE) to the post-translocational (POST) state as the newly formed A-site-bound peptidyl-tRNA and P-site-bound deacylated tRNA move to the P and E sites, respectively. Catalyzes the coordinated movement of the two tRNA molecules, the mRNA and conformational changes in the ribosome.</text>
</comment>
<comment type="subcellular location">
    <subcellularLocation>
        <location evidence="2">Cytoplasm</location>
    </subcellularLocation>
</comment>
<comment type="similarity">
    <text evidence="2">Belongs to the TRAFAC class translation factor GTPase superfamily. Classic translation factor GTPase family. EF-G/EF-2 subfamily.</text>
</comment>
<proteinExistence type="inferred from homology"/>
<evidence type="ECO:0000250" key="1"/>
<evidence type="ECO:0000255" key="2">
    <source>
        <dbReference type="HAMAP-Rule" id="MF_00054"/>
    </source>
</evidence>
<keyword id="KW-0007">Acetylation</keyword>
<keyword id="KW-0963">Cytoplasm</keyword>
<keyword id="KW-0251">Elongation factor</keyword>
<keyword id="KW-0342">GTP-binding</keyword>
<keyword id="KW-0547">Nucleotide-binding</keyword>
<keyword id="KW-0648">Protein biosynthesis</keyword>
<keyword id="KW-1185">Reference proteome</keyword>
<sequence length="704" mass="77581">MARTTPIARYRNIGISAHIDAGKTTTTERILFYTGVNHKIGEVHDGAATMDWMEQEQERGITITSAATTAFWSGMAKQYEPHRINIIDTPGHVDFTIEVERSMRVLDGAVMVYCAVGGVQPQSETVWRQANKYKVPRIAFVNKMDRMGANFLKVVNQIKTRLGANPVPLQLAIGAEEHFTGVVDLVKMKAINWNDADQGVTFEYEDIPADMVELANEWHQNLIESAAEASEELMEKYLGGEELTEAEIKGALRQRVLNNEIILVTCGSAFKNKGVQAMLDAVIDYLPSPVDVPAINGILDDGKDTPAERHASDDEPFSALAFKIATDPFVGNLTFFRVYSGVVNSGDTVLNSVKAARERFGRIVQMHANKREEIKEVRAGDIAAAIGLKDVTTGDTLCDPDAPIILERMEFPEPVISIAVEPKTKADQEKMGLALGRLAKEDPSFRVWTDEESNQTIIAGMGELHLDIIVDRMKREFNVEANVGKPQVAYRETIRQKVTDVEGKHAKQSGGRGQYGHVVIDMYPLEPGSNPKGYEFINDIKGGVIPGEYIPAVDKGIQEQLKAGPLAGYPVVDMGIRLHFGSYHDVDSSELAFKLAASIAFKEGFKKAKPVLLEPIMKVEVETPEENTGDVIGDLSRRRGMLKGQESEVTGVKIHAEVPLSEMFGYATQLRSLTKGRASYTMEFLKYDEAPSNVAQAVIEARGK</sequence>
<name>EFG_ECOK1</name>
<reference key="1">
    <citation type="journal article" date="2007" name="J. Bacteriol.">
        <title>The genome sequence of avian pathogenic Escherichia coli strain O1:K1:H7 shares strong similarities with human extraintestinal pathogenic E. coli genomes.</title>
        <authorList>
            <person name="Johnson T.J."/>
            <person name="Kariyawasam S."/>
            <person name="Wannemuehler Y."/>
            <person name="Mangiamele P."/>
            <person name="Johnson S.J."/>
            <person name="Doetkott C."/>
            <person name="Skyberg J.A."/>
            <person name="Lynne A.M."/>
            <person name="Johnson J.R."/>
            <person name="Nolan L.K."/>
        </authorList>
    </citation>
    <scope>NUCLEOTIDE SEQUENCE [LARGE SCALE GENOMIC DNA]</scope>
</reference>
<protein>
    <recommendedName>
        <fullName evidence="2">Elongation factor G</fullName>
        <shortName evidence="2">EF-G</shortName>
    </recommendedName>
</protein>
<dbReference type="EMBL" id="CP000468">
    <property type="protein sequence ID" value="ABJ02817.1"/>
    <property type="molecule type" value="Genomic_DNA"/>
</dbReference>
<dbReference type="RefSeq" id="WP_000124700.1">
    <property type="nucleotide sequence ID" value="NZ_CADILS010000059.1"/>
</dbReference>
<dbReference type="SMR" id="A1AGM7"/>
<dbReference type="GeneID" id="93778658"/>
<dbReference type="KEGG" id="ecv:APECO1_3113"/>
<dbReference type="HOGENOM" id="CLU_002794_4_1_6"/>
<dbReference type="Proteomes" id="UP000008216">
    <property type="component" value="Chromosome"/>
</dbReference>
<dbReference type="GO" id="GO:0005737">
    <property type="term" value="C:cytoplasm"/>
    <property type="evidence" value="ECO:0007669"/>
    <property type="project" value="UniProtKB-SubCell"/>
</dbReference>
<dbReference type="GO" id="GO:0005525">
    <property type="term" value="F:GTP binding"/>
    <property type="evidence" value="ECO:0007669"/>
    <property type="project" value="UniProtKB-UniRule"/>
</dbReference>
<dbReference type="GO" id="GO:0003924">
    <property type="term" value="F:GTPase activity"/>
    <property type="evidence" value="ECO:0007669"/>
    <property type="project" value="InterPro"/>
</dbReference>
<dbReference type="GO" id="GO:0097216">
    <property type="term" value="F:guanosine tetraphosphate binding"/>
    <property type="evidence" value="ECO:0007669"/>
    <property type="project" value="UniProtKB-ARBA"/>
</dbReference>
<dbReference type="GO" id="GO:0003746">
    <property type="term" value="F:translation elongation factor activity"/>
    <property type="evidence" value="ECO:0007669"/>
    <property type="project" value="UniProtKB-UniRule"/>
</dbReference>
<dbReference type="GO" id="GO:0032790">
    <property type="term" value="P:ribosome disassembly"/>
    <property type="evidence" value="ECO:0007669"/>
    <property type="project" value="TreeGrafter"/>
</dbReference>
<dbReference type="CDD" id="cd01886">
    <property type="entry name" value="EF-G"/>
    <property type="match status" value="1"/>
</dbReference>
<dbReference type="CDD" id="cd16262">
    <property type="entry name" value="EFG_III"/>
    <property type="match status" value="1"/>
</dbReference>
<dbReference type="CDD" id="cd01434">
    <property type="entry name" value="EFG_mtEFG1_IV"/>
    <property type="match status" value="1"/>
</dbReference>
<dbReference type="CDD" id="cd03713">
    <property type="entry name" value="EFG_mtEFG_C"/>
    <property type="match status" value="1"/>
</dbReference>
<dbReference type="CDD" id="cd04088">
    <property type="entry name" value="EFG_mtEFG_II"/>
    <property type="match status" value="1"/>
</dbReference>
<dbReference type="FunFam" id="2.40.30.10:FF:000006">
    <property type="entry name" value="Elongation factor G"/>
    <property type="match status" value="1"/>
</dbReference>
<dbReference type="FunFam" id="3.30.230.10:FF:000003">
    <property type="entry name" value="Elongation factor G"/>
    <property type="match status" value="1"/>
</dbReference>
<dbReference type="FunFam" id="3.30.70.240:FF:000001">
    <property type="entry name" value="Elongation factor G"/>
    <property type="match status" value="1"/>
</dbReference>
<dbReference type="FunFam" id="3.30.70.870:FF:000001">
    <property type="entry name" value="Elongation factor G"/>
    <property type="match status" value="1"/>
</dbReference>
<dbReference type="FunFam" id="3.40.50.300:FF:000029">
    <property type="entry name" value="Elongation factor G"/>
    <property type="match status" value="1"/>
</dbReference>
<dbReference type="Gene3D" id="3.30.230.10">
    <property type="match status" value="1"/>
</dbReference>
<dbReference type="Gene3D" id="3.30.70.240">
    <property type="match status" value="1"/>
</dbReference>
<dbReference type="Gene3D" id="3.30.70.870">
    <property type="entry name" value="Elongation Factor G (Translational Gtpase), domain 3"/>
    <property type="match status" value="1"/>
</dbReference>
<dbReference type="Gene3D" id="3.40.50.300">
    <property type="entry name" value="P-loop containing nucleotide triphosphate hydrolases"/>
    <property type="match status" value="1"/>
</dbReference>
<dbReference type="Gene3D" id="2.40.30.10">
    <property type="entry name" value="Translation factors"/>
    <property type="match status" value="1"/>
</dbReference>
<dbReference type="HAMAP" id="MF_00054_B">
    <property type="entry name" value="EF_G_EF_2_B"/>
    <property type="match status" value="1"/>
</dbReference>
<dbReference type="InterPro" id="IPR041095">
    <property type="entry name" value="EFG_II"/>
</dbReference>
<dbReference type="InterPro" id="IPR009022">
    <property type="entry name" value="EFG_III"/>
</dbReference>
<dbReference type="InterPro" id="IPR035647">
    <property type="entry name" value="EFG_III/V"/>
</dbReference>
<dbReference type="InterPro" id="IPR047872">
    <property type="entry name" value="EFG_IV"/>
</dbReference>
<dbReference type="InterPro" id="IPR035649">
    <property type="entry name" value="EFG_V"/>
</dbReference>
<dbReference type="InterPro" id="IPR000640">
    <property type="entry name" value="EFG_V-like"/>
</dbReference>
<dbReference type="InterPro" id="IPR004161">
    <property type="entry name" value="EFTu-like_2"/>
</dbReference>
<dbReference type="InterPro" id="IPR031157">
    <property type="entry name" value="G_TR_CS"/>
</dbReference>
<dbReference type="InterPro" id="IPR027417">
    <property type="entry name" value="P-loop_NTPase"/>
</dbReference>
<dbReference type="InterPro" id="IPR020568">
    <property type="entry name" value="Ribosomal_Su5_D2-typ_SF"/>
</dbReference>
<dbReference type="InterPro" id="IPR014721">
    <property type="entry name" value="Ribsml_uS5_D2-typ_fold_subgr"/>
</dbReference>
<dbReference type="InterPro" id="IPR005225">
    <property type="entry name" value="Small_GTP-bd"/>
</dbReference>
<dbReference type="InterPro" id="IPR000795">
    <property type="entry name" value="T_Tr_GTP-bd_dom"/>
</dbReference>
<dbReference type="InterPro" id="IPR009000">
    <property type="entry name" value="Transl_B-barrel_sf"/>
</dbReference>
<dbReference type="InterPro" id="IPR004540">
    <property type="entry name" value="Transl_elong_EFG/EF2"/>
</dbReference>
<dbReference type="InterPro" id="IPR005517">
    <property type="entry name" value="Transl_elong_EFG/EF2_IV"/>
</dbReference>
<dbReference type="NCBIfam" id="TIGR00484">
    <property type="entry name" value="EF-G"/>
    <property type="match status" value="1"/>
</dbReference>
<dbReference type="NCBIfam" id="NF009381">
    <property type="entry name" value="PRK12740.1-5"/>
    <property type="match status" value="1"/>
</dbReference>
<dbReference type="NCBIfam" id="TIGR00231">
    <property type="entry name" value="small_GTP"/>
    <property type="match status" value="1"/>
</dbReference>
<dbReference type="PANTHER" id="PTHR43261:SF1">
    <property type="entry name" value="RIBOSOME-RELEASING FACTOR 2, MITOCHONDRIAL"/>
    <property type="match status" value="1"/>
</dbReference>
<dbReference type="PANTHER" id="PTHR43261">
    <property type="entry name" value="TRANSLATION ELONGATION FACTOR G-RELATED"/>
    <property type="match status" value="1"/>
</dbReference>
<dbReference type="Pfam" id="PF00679">
    <property type="entry name" value="EFG_C"/>
    <property type="match status" value="1"/>
</dbReference>
<dbReference type="Pfam" id="PF14492">
    <property type="entry name" value="EFG_III"/>
    <property type="match status" value="1"/>
</dbReference>
<dbReference type="Pfam" id="PF03764">
    <property type="entry name" value="EFG_IV"/>
    <property type="match status" value="1"/>
</dbReference>
<dbReference type="Pfam" id="PF00009">
    <property type="entry name" value="GTP_EFTU"/>
    <property type="match status" value="1"/>
</dbReference>
<dbReference type="Pfam" id="PF03144">
    <property type="entry name" value="GTP_EFTU_D2"/>
    <property type="match status" value="1"/>
</dbReference>
<dbReference type="PRINTS" id="PR00315">
    <property type="entry name" value="ELONGATNFCT"/>
</dbReference>
<dbReference type="SMART" id="SM00838">
    <property type="entry name" value="EFG_C"/>
    <property type="match status" value="1"/>
</dbReference>
<dbReference type="SMART" id="SM00889">
    <property type="entry name" value="EFG_IV"/>
    <property type="match status" value="1"/>
</dbReference>
<dbReference type="SUPFAM" id="SSF54980">
    <property type="entry name" value="EF-G C-terminal domain-like"/>
    <property type="match status" value="2"/>
</dbReference>
<dbReference type="SUPFAM" id="SSF52540">
    <property type="entry name" value="P-loop containing nucleoside triphosphate hydrolases"/>
    <property type="match status" value="1"/>
</dbReference>
<dbReference type="SUPFAM" id="SSF54211">
    <property type="entry name" value="Ribosomal protein S5 domain 2-like"/>
    <property type="match status" value="1"/>
</dbReference>
<dbReference type="SUPFAM" id="SSF50447">
    <property type="entry name" value="Translation proteins"/>
    <property type="match status" value="1"/>
</dbReference>
<dbReference type="PROSITE" id="PS00301">
    <property type="entry name" value="G_TR_1"/>
    <property type="match status" value="1"/>
</dbReference>
<dbReference type="PROSITE" id="PS51722">
    <property type="entry name" value="G_TR_2"/>
    <property type="match status" value="1"/>
</dbReference>
<organism>
    <name type="scientific">Escherichia coli O1:K1 / APEC</name>
    <dbReference type="NCBI Taxonomy" id="405955"/>
    <lineage>
        <taxon>Bacteria</taxon>
        <taxon>Pseudomonadati</taxon>
        <taxon>Pseudomonadota</taxon>
        <taxon>Gammaproteobacteria</taxon>
        <taxon>Enterobacterales</taxon>
        <taxon>Enterobacteriaceae</taxon>
        <taxon>Escherichia</taxon>
    </lineage>
</organism>
<gene>
    <name evidence="2" type="primary">fusA</name>
    <name type="ordered locus">Ecok1_33230</name>
    <name type="ORF">APECO1_3113</name>
</gene>
<feature type="chain" id="PRO_1000008821" description="Elongation factor G">
    <location>
        <begin position="1"/>
        <end position="704"/>
    </location>
</feature>
<feature type="domain" description="tr-type G">
    <location>
        <begin position="8"/>
        <end position="290"/>
    </location>
</feature>
<feature type="binding site" evidence="2">
    <location>
        <begin position="17"/>
        <end position="24"/>
    </location>
    <ligand>
        <name>GTP</name>
        <dbReference type="ChEBI" id="CHEBI:37565"/>
    </ligand>
</feature>
<feature type="binding site" evidence="2">
    <location>
        <begin position="88"/>
        <end position="92"/>
    </location>
    <ligand>
        <name>GTP</name>
        <dbReference type="ChEBI" id="CHEBI:37565"/>
    </ligand>
</feature>
<feature type="binding site" evidence="2">
    <location>
        <begin position="142"/>
        <end position="145"/>
    </location>
    <ligand>
        <name>GTP</name>
        <dbReference type="ChEBI" id="CHEBI:37565"/>
    </ligand>
</feature>
<feature type="modified residue" description="N6-acetyllysine" evidence="1">
    <location>
        <position position="504"/>
    </location>
</feature>
<feature type="modified residue" description="N6-acetyllysine" evidence="1">
    <location>
        <position position="643"/>
    </location>
</feature>